<dbReference type="EMBL" id="AP008955">
    <property type="protein sequence ID" value="BAH41191.1"/>
    <property type="molecule type" value="Genomic_DNA"/>
</dbReference>
<dbReference type="RefSeq" id="WP_012683978.1">
    <property type="nucleotide sequence ID" value="NC_012491.1"/>
</dbReference>
<dbReference type="SMR" id="C0ZIH3"/>
<dbReference type="STRING" id="358681.BBR47_02140"/>
<dbReference type="GeneID" id="87588878"/>
<dbReference type="KEGG" id="bbe:BBR47_02140"/>
<dbReference type="eggNOG" id="COG0048">
    <property type="taxonomic scope" value="Bacteria"/>
</dbReference>
<dbReference type="HOGENOM" id="CLU_104295_1_2_9"/>
<dbReference type="Proteomes" id="UP000001877">
    <property type="component" value="Chromosome"/>
</dbReference>
<dbReference type="GO" id="GO:0015935">
    <property type="term" value="C:small ribosomal subunit"/>
    <property type="evidence" value="ECO:0007669"/>
    <property type="project" value="InterPro"/>
</dbReference>
<dbReference type="GO" id="GO:0019843">
    <property type="term" value="F:rRNA binding"/>
    <property type="evidence" value="ECO:0007669"/>
    <property type="project" value="UniProtKB-UniRule"/>
</dbReference>
<dbReference type="GO" id="GO:0003735">
    <property type="term" value="F:structural constituent of ribosome"/>
    <property type="evidence" value="ECO:0007669"/>
    <property type="project" value="InterPro"/>
</dbReference>
<dbReference type="GO" id="GO:0000049">
    <property type="term" value="F:tRNA binding"/>
    <property type="evidence" value="ECO:0007669"/>
    <property type="project" value="UniProtKB-UniRule"/>
</dbReference>
<dbReference type="GO" id="GO:0006412">
    <property type="term" value="P:translation"/>
    <property type="evidence" value="ECO:0007669"/>
    <property type="project" value="UniProtKB-UniRule"/>
</dbReference>
<dbReference type="CDD" id="cd03368">
    <property type="entry name" value="Ribosomal_S12"/>
    <property type="match status" value="1"/>
</dbReference>
<dbReference type="FunFam" id="2.40.50.140:FF:000001">
    <property type="entry name" value="30S ribosomal protein S12"/>
    <property type="match status" value="1"/>
</dbReference>
<dbReference type="Gene3D" id="2.40.50.140">
    <property type="entry name" value="Nucleic acid-binding proteins"/>
    <property type="match status" value="1"/>
</dbReference>
<dbReference type="HAMAP" id="MF_00403_B">
    <property type="entry name" value="Ribosomal_uS12_B"/>
    <property type="match status" value="1"/>
</dbReference>
<dbReference type="InterPro" id="IPR012340">
    <property type="entry name" value="NA-bd_OB-fold"/>
</dbReference>
<dbReference type="InterPro" id="IPR006032">
    <property type="entry name" value="Ribosomal_uS12"/>
</dbReference>
<dbReference type="InterPro" id="IPR005679">
    <property type="entry name" value="Ribosomal_uS12_bac"/>
</dbReference>
<dbReference type="NCBIfam" id="TIGR00981">
    <property type="entry name" value="rpsL_bact"/>
    <property type="match status" value="1"/>
</dbReference>
<dbReference type="PANTHER" id="PTHR11652">
    <property type="entry name" value="30S RIBOSOMAL PROTEIN S12 FAMILY MEMBER"/>
    <property type="match status" value="1"/>
</dbReference>
<dbReference type="Pfam" id="PF00164">
    <property type="entry name" value="Ribosom_S12_S23"/>
    <property type="match status" value="1"/>
</dbReference>
<dbReference type="PRINTS" id="PR01034">
    <property type="entry name" value="RIBOSOMALS12"/>
</dbReference>
<dbReference type="SUPFAM" id="SSF50249">
    <property type="entry name" value="Nucleic acid-binding proteins"/>
    <property type="match status" value="1"/>
</dbReference>
<dbReference type="PROSITE" id="PS00055">
    <property type="entry name" value="RIBOSOMAL_S12"/>
    <property type="match status" value="1"/>
</dbReference>
<reference key="1">
    <citation type="submission" date="2005-03" db="EMBL/GenBank/DDBJ databases">
        <title>Brevibacillus brevis strain 47, complete genome.</title>
        <authorList>
            <person name="Hosoyama A."/>
            <person name="Yamada R."/>
            <person name="Hongo Y."/>
            <person name="Terui Y."/>
            <person name="Ankai A."/>
            <person name="Masuyama W."/>
            <person name="Sekiguchi M."/>
            <person name="Takeda T."/>
            <person name="Asano K."/>
            <person name="Ohji S."/>
            <person name="Ichikawa N."/>
            <person name="Narita S."/>
            <person name="Aoki N."/>
            <person name="Miura H."/>
            <person name="Matsushita S."/>
            <person name="Sekigawa T."/>
            <person name="Yamagata H."/>
            <person name="Yoshikawa H."/>
            <person name="Udaka S."/>
            <person name="Tanikawa S."/>
            <person name="Fujita N."/>
        </authorList>
    </citation>
    <scope>NUCLEOTIDE SEQUENCE [LARGE SCALE GENOMIC DNA]</scope>
    <source>
        <strain>47 / JCM 6285 / NBRC 100599</strain>
    </source>
</reference>
<evidence type="ECO:0000250" key="1"/>
<evidence type="ECO:0000255" key="2">
    <source>
        <dbReference type="HAMAP-Rule" id="MF_00403"/>
    </source>
</evidence>
<evidence type="ECO:0000256" key="3">
    <source>
        <dbReference type="SAM" id="MobiDB-lite"/>
    </source>
</evidence>
<evidence type="ECO:0000305" key="4"/>
<feature type="chain" id="PRO_1000134619" description="Small ribosomal subunit protein uS12">
    <location>
        <begin position="1"/>
        <end position="144"/>
    </location>
</feature>
<feature type="region of interest" description="Disordered" evidence="3">
    <location>
        <begin position="1"/>
        <end position="55"/>
    </location>
</feature>
<feature type="region of interest" description="Disordered" evidence="3">
    <location>
        <begin position="119"/>
        <end position="144"/>
    </location>
</feature>
<feature type="compositionally biased region" description="Polar residues" evidence="3">
    <location>
        <begin position="27"/>
        <end position="42"/>
    </location>
</feature>
<feature type="compositionally biased region" description="Basic residues" evidence="3">
    <location>
        <begin position="124"/>
        <end position="144"/>
    </location>
</feature>
<feature type="modified residue" description="3-methylthioaspartic acid" evidence="1">
    <location>
        <position position="102"/>
    </location>
</feature>
<organism>
    <name type="scientific">Brevibacillus brevis (strain 47 / JCM 6285 / NBRC 100599)</name>
    <dbReference type="NCBI Taxonomy" id="358681"/>
    <lineage>
        <taxon>Bacteria</taxon>
        <taxon>Bacillati</taxon>
        <taxon>Bacillota</taxon>
        <taxon>Bacilli</taxon>
        <taxon>Bacillales</taxon>
        <taxon>Paenibacillaceae</taxon>
        <taxon>Brevibacillus</taxon>
    </lineage>
</organism>
<sequence length="144" mass="15804">MPTINQLVRKGREDKVVKSKSPALQKGYNSFKKSQTNQSSPQKRGVCTRVGTMTPKKPNSALRKYARVRLTNGIEVTAYIGGIGHNLQEHSVVLVRGGRVKDLPGVRYHIVRGALDTAGVNNRKQGRSKYGTKRPKPGQAAAKK</sequence>
<gene>
    <name evidence="2" type="primary">rpsL</name>
    <name type="ordered locus">BBR47_02140</name>
</gene>
<keyword id="KW-0488">Methylation</keyword>
<keyword id="KW-1185">Reference proteome</keyword>
<keyword id="KW-0687">Ribonucleoprotein</keyword>
<keyword id="KW-0689">Ribosomal protein</keyword>
<keyword id="KW-0694">RNA-binding</keyword>
<keyword id="KW-0699">rRNA-binding</keyword>
<keyword id="KW-0820">tRNA-binding</keyword>
<protein>
    <recommendedName>
        <fullName evidence="2">Small ribosomal subunit protein uS12</fullName>
    </recommendedName>
    <alternativeName>
        <fullName evidence="4">30S ribosomal protein S12</fullName>
    </alternativeName>
</protein>
<accession>C0ZIH3</accession>
<comment type="function">
    <text evidence="2">With S4 and S5 plays an important role in translational accuracy.</text>
</comment>
<comment type="function">
    <text evidence="2">Interacts with and stabilizes bases of the 16S rRNA that are involved in tRNA selection in the A site and with the mRNA backbone. Located at the interface of the 30S and 50S subunits, it traverses the body of the 30S subunit contacting proteins on the other side and probably holding the rRNA structure together. The combined cluster of proteins S8, S12 and S17 appears to hold together the shoulder and platform of the 30S subunit.</text>
</comment>
<comment type="subunit">
    <text evidence="2">Part of the 30S ribosomal subunit. Contacts proteins S8 and S17. May interact with IF1 in the 30S initiation complex.</text>
</comment>
<comment type="similarity">
    <text evidence="2">Belongs to the universal ribosomal protein uS12 family.</text>
</comment>
<name>RS12_BREBN</name>
<proteinExistence type="inferred from homology"/>